<reference key="1">
    <citation type="journal article" date="1995" name="FEMS Microbiol. Lett.">
        <title>A comparison of gene organization in the zwf region of the genomes of the cyanobacteria Synechococcus sp. PCC 7942 and Anabaena sp. PCC 7120.</title>
        <authorList>
            <person name="Newman J."/>
            <person name="Karakaya H."/>
            <person name="Scanlan D.J."/>
            <person name="Mann N.H."/>
        </authorList>
    </citation>
    <scope>NUCLEOTIDE SEQUENCE [GENOMIC DNA]</scope>
</reference>
<reference key="2">
    <citation type="journal article" date="2001" name="DNA Res.">
        <title>Complete genomic sequence of the filamentous nitrogen-fixing cyanobacterium Anabaena sp. strain PCC 7120.</title>
        <authorList>
            <person name="Kaneko T."/>
            <person name="Nakamura Y."/>
            <person name="Wolk C.P."/>
            <person name="Kuritz T."/>
            <person name="Sasamoto S."/>
            <person name="Watanabe A."/>
            <person name="Iriguchi M."/>
            <person name="Ishikawa A."/>
            <person name="Kawashima K."/>
            <person name="Kimura T."/>
            <person name="Kishida Y."/>
            <person name="Kohara M."/>
            <person name="Matsumoto M."/>
            <person name="Matsuno A."/>
            <person name="Muraki A."/>
            <person name="Nakazaki N."/>
            <person name="Shimpo S."/>
            <person name="Sugimoto M."/>
            <person name="Takazawa M."/>
            <person name="Yamada M."/>
            <person name="Yasuda M."/>
            <person name="Tabata S."/>
        </authorList>
    </citation>
    <scope>NUCLEOTIDE SEQUENCE [LARGE SCALE GENOMIC DNA]</scope>
    <source>
        <strain>PCC 7120 / SAG 25.82 / UTEX 2576</strain>
    </source>
</reference>
<accession>P48992</accession>
<proteinExistence type="inferred from homology"/>
<evidence type="ECO:0000255" key="1">
    <source>
        <dbReference type="HAMAP-Rule" id="MF_00966"/>
    </source>
</evidence>
<evidence type="ECO:0000305" key="2"/>
<gene>
    <name evidence="1" type="primary">zwf</name>
    <name type="ordered locus">all4019</name>
</gene>
<protein>
    <recommendedName>
        <fullName evidence="1">Glucose-6-phosphate 1-dehydrogenase</fullName>
        <shortName evidence="1">G6PD</shortName>
        <ecNumber evidence="1">1.1.1.49</ecNumber>
    </recommendedName>
</protein>
<keyword id="KW-0119">Carbohydrate metabolism</keyword>
<keyword id="KW-0313">Glucose metabolism</keyword>
<keyword id="KW-0521">NADP</keyword>
<keyword id="KW-0560">Oxidoreductase</keyword>
<keyword id="KW-1185">Reference proteome</keyword>
<name>G6PD_NOSS1</name>
<dbReference type="EC" id="1.1.1.49" evidence="1"/>
<dbReference type="EMBL" id="U33282">
    <property type="protein sequence ID" value="AAA98853.1"/>
    <property type="molecule type" value="Genomic_DNA"/>
</dbReference>
<dbReference type="EMBL" id="BA000019">
    <property type="protein sequence ID" value="BAB75718.1"/>
    <property type="molecule type" value="Genomic_DNA"/>
</dbReference>
<dbReference type="PIR" id="AD2308">
    <property type="entry name" value="AD2308"/>
</dbReference>
<dbReference type="RefSeq" id="WP_010998159.1">
    <property type="nucleotide sequence ID" value="NZ_RSCN01000023.1"/>
</dbReference>
<dbReference type="SMR" id="P48992"/>
<dbReference type="STRING" id="103690.gene:10496062"/>
<dbReference type="KEGG" id="ana:all4019"/>
<dbReference type="eggNOG" id="COG0364">
    <property type="taxonomic scope" value="Bacteria"/>
</dbReference>
<dbReference type="OrthoDB" id="9802739at2"/>
<dbReference type="SABIO-RK" id="P48992"/>
<dbReference type="UniPathway" id="UPA00115">
    <property type="reaction ID" value="UER00408"/>
</dbReference>
<dbReference type="Proteomes" id="UP000002483">
    <property type="component" value="Chromosome"/>
</dbReference>
<dbReference type="GO" id="GO:0005829">
    <property type="term" value="C:cytosol"/>
    <property type="evidence" value="ECO:0007669"/>
    <property type="project" value="TreeGrafter"/>
</dbReference>
<dbReference type="GO" id="GO:0004345">
    <property type="term" value="F:glucose-6-phosphate dehydrogenase activity"/>
    <property type="evidence" value="ECO:0007669"/>
    <property type="project" value="UniProtKB-UniRule"/>
</dbReference>
<dbReference type="GO" id="GO:0050661">
    <property type="term" value="F:NADP binding"/>
    <property type="evidence" value="ECO:0007669"/>
    <property type="project" value="UniProtKB-UniRule"/>
</dbReference>
<dbReference type="GO" id="GO:0006006">
    <property type="term" value="P:glucose metabolic process"/>
    <property type="evidence" value="ECO:0007669"/>
    <property type="project" value="UniProtKB-KW"/>
</dbReference>
<dbReference type="GO" id="GO:0009051">
    <property type="term" value="P:pentose-phosphate shunt, oxidative branch"/>
    <property type="evidence" value="ECO:0007669"/>
    <property type="project" value="TreeGrafter"/>
</dbReference>
<dbReference type="Gene3D" id="3.30.360.10">
    <property type="entry name" value="Dihydrodipicolinate Reductase, domain 2"/>
    <property type="match status" value="1"/>
</dbReference>
<dbReference type="Gene3D" id="3.40.50.720">
    <property type="entry name" value="NAD(P)-binding Rossmann-like Domain"/>
    <property type="match status" value="1"/>
</dbReference>
<dbReference type="HAMAP" id="MF_00966">
    <property type="entry name" value="G6PD"/>
    <property type="match status" value="1"/>
</dbReference>
<dbReference type="InterPro" id="IPR001282">
    <property type="entry name" value="G6P_DH"/>
</dbReference>
<dbReference type="InterPro" id="IPR019796">
    <property type="entry name" value="G6P_DH_AS"/>
</dbReference>
<dbReference type="InterPro" id="IPR022675">
    <property type="entry name" value="G6P_DH_C"/>
</dbReference>
<dbReference type="InterPro" id="IPR022674">
    <property type="entry name" value="G6P_DH_NAD-bd"/>
</dbReference>
<dbReference type="InterPro" id="IPR036291">
    <property type="entry name" value="NAD(P)-bd_dom_sf"/>
</dbReference>
<dbReference type="NCBIfam" id="TIGR00871">
    <property type="entry name" value="zwf"/>
    <property type="match status" value="1"/>
</dbReference>
<dbReference type="PANTHER" id="PTHR23429:SF0">
    <property type="entry name" value="GLUCOSE-6-PHOSPHATE 1-DEHYDROGENASE"/>
    <property type="match status" value="1"/>
</dbReference>
<dbReference type="PANTHER" id="PTHR23429">
    <property type="entry name" value="GLUCOSE-6-PHOSPHATE 1-DEHYDROGENASE G6PD"/>
    <property type="match status" value="1"/>
</dbReference>
<dbReference type="Pfam" id="PF02781">
    <property type="entry name" value="G6PD_C"/>
    <property type="match status" value="1"/>
</dbReference>
<dbReference type="Pfam" id="PF00479">
    <property type="entry name" value="G6PD_N"/>
    <property type="match status" value="1"/>
</dbReference>
<dbReference type="PIRSF" id="PIRSF000110">
    <property type="entry name" value="G6PD"/>
    <property type="match status" value="1"/>
</dbReference>
<dbReference type="PRINTS" id="PR00079">
    <property type="entry name" value="G6PDHDRGNASE"/>
</dbReference>
<dbReference type="SUPFAM" id="SSF55347">
    <property type="entry name" value="Glyceraldehyde-3-phosphate dehydrogenase-like, C-terminal domain"/>
    <property type="match status" value="1"/>
</dbReference>
<dbReference type="SUPFAM" id="SSF51735">
    <property type="entry name" value="NAD(P)-binding Rossmann-fold domains"/>
    <property type="match status" value="1"/>
</dbReference>
<dbReference type="PROSITE" id="PS00069">
    <property type="entry name" value="G6P_DEHYDROGENASE"/>
    <property type="match status" value="1"/>
</dbReference>
<comment type="function">
    <text evidence="1">Catalyzes the oxidation of glucose 6-phosphate to 6-phosphogluconolactone.</text>
</comment>
<comment type="catalytic activity">
    <reaction evidence="1">
        <text>D-glucose 6-phosphate + NADP(+) = 6-phospho-D-glucono-1,5-lactone + NADPH + H(+)</text>
        <dbReference type="Rhea" id="RHEA:15841"/>
        <dbReference type="ChEBI" id="CHEBI:15378"/>
        <dbReference type="ChEBI" id="CHEBI:57783"/>
        <dbReference type="ChEBI" id="CHEBI:57955"/>
        <dbReference type="ChEBI" id="CHEBI:58349"/>
        <dbReference type="ChEBI" id="CHEBI:61548"/>
        <dbReference type="EC" id="1.1.1.49"/>
    </reaction>
</comment>
<comment type="pathway">
    <text evidence="1">Carbohydrate degradation; pentose phosphate pathway; D-ribulose 5-phosphate from D-glucose 6-phosphate (oxidative stage): step 1/3.</text>
</comment>
<comment type="similarity">
    <text evidence="1">Belongs to the glucose-6-phosphate dehydrogenase family.</text>
</comment>
<organism>
    <name type="scientific">Nostoc sp. (strain PCC 7120 / SAG 25.82 / UTEX 2576)</name>
    <dbReference type="NCBI Taxonomy" id="103690"/>
    <lineage>
        <taxon>Bacteria</taxon>
        <taxon>Bacillati</taxon>
        <taxon>Cyanobacteriota</taxon>
        <taxon>Cyanophyceae</taxon>
        <taxon>Nostocales</taxon>
        <taxon>Nostocaceae</taxon>
        <taxon>Nostoc</taxon>
    </lineage>
</organism>
<feature type="chain" id="PRO_0000068109" description="Glucose-6-phosphate 1-dehydrogenase">
    <location>
        <begin position="1"/>
        <end position="509"/>
    </location>
</feature>
<feature type="active site" description="Proton acceptor" evidence="1">
    <location>
        <position position="259"/>
    </location>
</feature>
<feature type="binding site" evidence="1">
    <location>
        <position position="62"/>
    </location>
    <ligand>
        <name>NADP(+)</name>
        <dbReference type="ChEBI" id="CHEBI:58349"/>
    </ligand>
</feature>
<feature type="binding site" evidence="1">
    <location>
        <begin position="104"/>
        <end position="105"/>
    </location>
    <ligand>
        <name>NADP(+)</name>
        <dbReference type="ChEBI" id="CHEBI:58349"/>
    </ligand>
</feature>
<feature type="binding site" evidence="1">
    <location>
        <position position="167"/>
    </location>
    <ligand>
        <name>NADP(+)</name>
        <dbReference type="ChEBI" id="CHEBI:58349"/>
    </ligand>
</feature>
<feature type="binding site" evidence="1">
    <location>
        <position position="197"/>
    </location>
    <ligand>
        <name>substrate</name>
    </ligand>
</feature>
<feature type="binding site" evidence="1">
    <location>
        <position position="201"/>
    </location>
    <ligand>
        <name>substrate</name>
    </ligand>
</feature>
<feature type="binding site" evidence="1">
    <location>
        <position position="235"/>
    </location>
    <ligand>
        <name>substrate</name>
    </ligand>
</feature>
<feature type="binding site" evidence="1">
    <location>
        <position position="254"/>
    </location>
    <ligand>
        <name>substrate</name>
    </ligand>
</feature>
<feature type="binding site" evidence="1">
    <location>
        <position position="359"/>
    </location>
    <ligand>
        <name>substrate</name>
    </ligand>
</feature>
<feature type="binding site" evidence="1">
    <location>
        <position position="364"/>
    </location>
    <ligand>
        <name>substrate</name>
    </ligand>
</feature>
<feature type="sequence conflict" description="In Ref. 1; AAA98853." evidence="2" ref="1">
    <original>T</original>
    <variation>S</variation>
    <location>
        <position position="417"/>
    </location>
</feature>
<sequence>MVSLLENPLRVGLQQQGMPEPQIIVIFGASGDLTWRKLVPALYKLRRERRIPPETTIVGVARREWSHEYFREQMQKGMEEAHSSVELGELWQDFSQGLFYCPGDIDNPESYQKLKNLLSELDEKRGTRGNRMFYLSVAPNFFPEAIKQLGGAGMLDDPYKHRLVIEKPFGRDLASAQSLNAVVQKYCKEHQVYRIDHYLGKETVQNLLVFRFANAIFEPLWNRQFVDHVQITVAETVGVEDRAGYYEKAGALRDMLQNHLMQLYCLTAMEAPNSMDADSIRTEKVKVLQATRLADVHNLSRSAIRGQYSAGWMKGQQVPGYRTEPGVDPNSSTPTYVGMKFLVDNWRWQGVPFYLRTGKRMPKKVSEISIHFRDVPSRMFQSAAQQRNANILAMRIQPNEGISLRFDVKMPGAEFRTRSVDMDFSYGSFGIEATSDAYDRLFLDCMMGDQTLFTRADEVEAAWQVVTPALSVWDSPADPATIPQYEAGTWEPAEAEFLINQDGRRWRRL</sequence>